<name>ACP_ACIB5</name>
<reference key="1">
    <citation type="journal article" date="2008" name="J. Bacteriol.">
        <title>Comparative genome sequence analysis of multidrug-resistant Acinetobacter baumannii.</title>
        <authorList>
            <person name="Adams M.D."/>
            <person name="Goglin K."/>
            <person name="Molyneaux N."/>
            <person name="Hujer K.M."/>
            <person name="Lavender H."/>
            <person name="Jamison J.J."/>
            <person name="MacDonald I.J."/>
            <person name="Martin K.M."/>
            <person name="Russo T."/>
            <person name="Campagnari A.A."/>
            <person name="Hujer A.M."/>
            <person name="Bonomo R.A."/>
            <person name="Gill S.R."/>
        </authorList>
    </citation>
    <scope>NUCLEOTIDE SEQUENCE [LARGE SCALE GENOMIC DNA]</scope>
    <source>
        <strain>AB0057</strain>
    </source>
</reference>
<sequence>MSDIEQRVKQAVAEQLGLKAEEIKNEASFMDDLGADSLDLVELVMSFENDFDITIPDEDSNEITTVQSAIDYVTKKLG</sequence>
<dbReference type="EMBL" id="CP001182">
    <property type="protein sequence ID" value="ACJ40666.1"/>
    <property type="molecule type" value="Genomic_DNA"/>
</dbReference>
<dbReference type="RefSeq" id="WP_001279871.1">
    <property type="nucleotide sequence ID" value="NC_011586.2"/>
</dbReference>
<dbReference type="SMR" id="B7I7A7"/>
<dbReference type="GeneID" id="92892750"/>
<dbReference type="KEGG" id="abn:AB57_0872"/>
<dbReference type="HOGENOM" id="CLU_108696_5_1_6"/>
<dbReference type="UniPathway" id="UPA00094"/>
<dbReference type="Proteomes" id="UP000007094">
    <property type="component" value="Chromosome"/>
</dbReference>
<dbReference type="GO" id="GO:0005829">
    <property type="term" value="C:cytosol"/>
    <property type="evidence" value="ECO:0007669"/>
    <property type="project" value="TreeGrafter"/>
</dbReference>
<dbReference type="GO" id="GO:0016020">
    <property type="term" value="C:membrane"/>
    <property type="evidence" value="ECO:0007669"/>
    <property type="project" value="GOC"/>
</dbReference>
<dbReference type="GO" id="GO:0000035">
    <property type="term" value="F:acyl binding"/>
    <property type="evidence" value="ECO:0007669"/>
    <property type="project" value="TreeGrafter"/>
</dbReference>
<dbReference type="GO" id="GO:0000036">
    <property type="term" value="F:acyl carrier activity"/>
    <property type="evidence" value="ECO:0007669"/>
    <property type="project" value="UniProtKB-UniRule"/>
</dbReference>
<dbReference type="GO" id="GO:0009245">
    <property type="term" value="P:lipid A biosynthetic process"/>
    <property type="evidence" value="ECO:0007669"/>
    <property type="project" value="TreeGrafter"/>
</dbReference>
<dbReference type="FunFam" id="1.10.1200.10:FF:000001">
    <property type="entry name" value="Acyl carrier protein"/>
    <property type="match status" value="1"/>
</dbReference>
<dbReference type="Gene3D" id="1.10.1200.10">
    <property type="entry name" value="ACP-like"/>
    <property type="match status" value="1"/>
</dbReference>
<dbReference type="HAMAP" id="MF_01217">
    <property type="entry name" value="Acyl_carrier"/>
    <property type="match status" value="1"/>
</dbReference>
<dbReference type="InterPro" id="IPR003231">
    <property type="entry name" value="ACP"/>
</dbReference>
<dbReference type="InterPro" id="IPR036736">
    <property type="entry name" value="ACP-like_sf"/>
</dbReference>
<dbReference type="InterPro" id="IPR009081">
    <property type="entry name" value="PP-bd_ACP"/>
</dbReference>
<dbReference type="InterPro" id="IPR006162">
    <property type="entry name" value="Ppantetheine_attach_site"/>
</dbReference>
<dbReference type="NCBIfam" id="TIGR00517">
    <property type="entry name" value="acyl_carrier"/>
    <property type="match status" value="1"/>
</dbReference>
<dbReference type="NCBIfam" id="NF002148">
    <property type="entry name" value="PRK00982.1-2"/>
    <property type="match status" value="1"/>
</dbReference>
<dbReference type="NCBIfam" id="NF002149">
    <property type="entry name" value="PRK00982.1-3"/>
    <property type="match status" value="1"/>
</dbReference>
<dbReference type="NCBIfam" id="NF002150">
    <property type="entry name" value="PRK00982.1-4"/>
    <property type="match status" value="1"/>
</dbReference>
<dbReference type="NCBIfam" id="NF002151">
    <property type="entry name" value="PRK00982.1-5"/>
    <property type="match status" value="1"/>
</dbReference>
<dbReference type="PANTHER" id="PTHR20863">
    <property type="entry name" value="ACYL CARRIER PROTEIN"/>
    <property type="match status" value="1"/>
</dbReference>
<dbReference type="PANTHER" id="PTHR20863:SF76">
    <property type="entry name" value="CARRIER DOMAIN-CONTAINING PROTEIN"/>
    <property type="match status" value="1"/>
</dbReference>
<dbReference type="Pfam" id="PF00550">
    <property type="entry name" value="PP-binding"/>
    <property type="match status" value="1"/>
</dbReference>
<dbReference type="SUPFAM" id="SSF47336">
    <property type="entry name" value="ACP-like"/>
    <property type="match status" value="1"/>
</dbReference>
<dbReference type="PROSITE" id="PS50075">
    <property type="entry name" value="CARRIER"/>
    <property type="match status" value="1"/>
</dbReference>
<dbReference type="PROSITE" id="PS00012">
    <property type="entry name" value="PHOSPHOPANTETHEINE"/>
    <property type="match status" value="1"/>
</dbReference>
<keyword id="KW-0963">Cytoplasm</keyword>
<keyword id="KW-0275">Fatty acid biosynthesis</keyword>
<keyword id="KW-0276">Fatty acid metabolism</keyword>
<keyword id="KW-0444">Lipid biosynthesis</keyword>
<keyword id="KW-0443">Lipid metabolism</keyword>
<keyword id="KW-0596">Phosphopantetheine</keyword>
<keyword id="KW-0597">Phosphoprotein</keyword>
<gene>
    <name evidence="1" type="primary">acpP</name>
    <name type="ordered locus">AB57_0872</name>
</gene>
<protein>
    <recommendedName>
        <fullName evidence="1">Acyl carrier protein</fullName>
        <shortName evidence="1">ACP</shortName>
    </recommendedName>
</protein>
<comment type="function">
    <text evidence="1">Carrier of the growing fatty acid chain in fatty acid biosynthesis.</text>
</comment>
<comment type="pathway">
    <text evidence="1">Lipid metabolism; fatty acid biosynthesis.</text>
</comment>
<comment type="subcellular location">
    <subcellularLocation>
        <location evidence="1">Cytoplasm</location>
    </subcellularLocation>
</comment>
<comment type="PTM">
    <text evidence="1">4'-phosphopantetheine is transferred from CoA to a specific serine of apo-ACP by AcpS. This modification is essential for activity because fatty acids are bound in thioester linkage to the sulfhydryl of the prosthetic group.</text>
</comment>
<comment type="similarity">
    <text evidence="1">Belongs to the acyl carrier protein (ACP) family.</text>
</comment>
<accession>B7I7A7</accession>
<feature type="chain" id="PRO_1000138991" description="Acyl carrier protein">
    <location>
        <begin position="1"/>
        <end position="78"/>
    </location>
</feature>
<feature type="domain" description="Carrier" evidence="2">
    <location>
        <begin position="2"/>
        <end position="77"/>
    </location>
</feature>
<feature type="modified residue" description="O-(pantetheine 4'-phosphoryl)serine" evidence="2">
    <location>
        <position position="37"/>
    </location>
</feature>
<evidence type="ECO:0000255" key="1">
    <source>
        <dbReference type="HAMAP-Rule" id="MF_01217"/>
    </source>
</evidence>
<evidence type="ECO:0000255" key="2">
    <source>
        <dbReference type="PROSITE-ProRule" id="PRU00258"/>
    </source>
</evidence>
<proteinExistence type="inferred from homology"/>
<organism>
    <name type="scientific">Acinetobacter baumannii (strain AB0057)</name>
    <dbReference type="NCBI Taxonomy" id="480119"/>
    <lineage>
        <taxon>Bacteria</taxon>
        <taxon>Pseudomonadati</taxon>
        <taxon>Pseudomonadota</taxon>
        <taxon>Gammaproteobacteria</taxon>
        <taxon>Moraxellales</taxon>
        <taxon>Moraxellaceae</taxon>
        <taxon>Acinetobacter</taxon>
        <taxon>Acinetobacter calcoaceticus/baumannii complex</taxon>
    </lineage>
</organism>